<name>SYS_CHLAA</name>
<dbReference type="EC" id="6.1.1.11" evidence="1"/>
<dbReference type="EMBL" id="CP000909">
    <property type="protein sequence ID" value="ABY33694.1"/>
    <property type="molecule type" value="Genomic_DNA"/>
</dbReference>
<dbReference type="RefSeq" id="WP_012256350.1">
    <property type="nucleotide sequence ID" value="NC_010175.1"/>
</dbReference>
<dbReference type="RefSeq" id="YP_001634083.1">
    <property type="nucleotide sequence ID" value="NC_010175.1"/>
</dbReference>
<dbReference type="SMR" id="A9WE34"/>
<dbReference type="FunCoup" id="A9WE34">
    <property type="interactions" value="473"/>
</dbReference>
<dbReference type="STRING" id="324602.Caur_0444"/>
<dbReference type="EnsemblBacteria" id="ABY33694">
    <property type="protein sequence ID" value="ABY33694"/>
    <property type="gene ID" value="Caur_0444"/>
</dbReference>
<dbReference type="KEGG" id="cau:Caur_0444"/>
<dbReference type="PATRIC" id="fig|324602.8.peg.504"/>
<dbReference type="eggNOG" id="COG0172">
    <property type="taxonomic scope" value="Bacteria"/>
</dbReference>
<dbReference type="HOGENOM" id="CLU_023797_1_1_0"/>
<dbReference type="InParanoid" id="A9WE34"/>
<dbReference type="UniPathway" id="UPA00906">
    <property type="reaction ID" value="UER00895"/>
</dbReference>
<dbReference type="Proteomes" id="UP000002008">
    <property type="component" value="Chromosome"/>
</dbReference>
<dbReference type="GO" id="GO:0005737">
    <property type="term" value="C:cytoplasm"/>
    <property type="evidence" value="ECO:0007669"/>
    <property type="project" value="UniProtKB-SubCell"/>
</dbReference>
<dbReference type="GO" id="GO:0005524">
    <property type="term" value="F:ATP binding"/>
    <property type="evidence" value="ECO:0007669"/>
    <property type="project" value="UniProtKB-UniRule"/>
</dbReference>
<dbReference type="GO" id="GO:0004828">
    <property type="term" value="F:serine-tRNA ligase activity"/>
    <property type="evidence" value="ECO:0007669"/>
    <property type="project" value="UniProtKB-UniRule"/>
</dbReference>
<dbReference type="GO" id="GO:0016260">
    <property type="term" value="P:selenocysteine biosynthetic process"/>
    <property type="evidence" value="ECO:0007669"/>
    <property type="project" value="UniProtKB-UniRule"/>
</dbReference>
<dbReference type="GO" id="GO:0006434">
    <property type="term" value="P:seryl-tRNA aminoacylation"/>
    <property type="evidence" value="ECO:0007669"/>
    <property type="project" value="UniProtKB-UniRule"/>
</dbReference>
<dbReference type="CDD" id="cd00770">
    <property type="entry name" value="SerRS_core"/>
    <property type="match status" value="1"/>
</dbReference>
<dbReference type="Gene3D" id="3.30.930.10">
    <property type="entry name" value="Bira Bifunctional Protein, Domain 2"/>
    <property type="match status" value="1"/>
</dbReference>
<dbReference type="Gene3D" id="1.10.287.40">
    <property type="entry name" value="Serine-tRNA synthetase, tRNA binding domain"/>
    <property type="match status" value="1"/>
</dbReference>
<dbReference type="HAMAP" id="MF_00176">
    <property type="entry name" value="Ser_tRNA_synth_type1"/>
    <property type="match status" value="1"/>
</dbReference>
<dbReference type="InterPro" id="IPR002314">
    <property type="entry name" value="aa-tRNA-synt_IIb"/>
</dbReference>
<dbReference type="InterPro" id="IPR006195">
    <property type="entry name" value="aa-tRNA-synth_II"/>
</dbReference>
<dbReference type="InterPro" id="IPR045864">
    <property type="entry name" value="aa-tRNA-synth_II/BPL/LPL"/>
</dbReference>
<dbReference type="InterPro" id="IPR002317">
    <property type="entry name" value="Ser-tRNA-ligase_type_1"/>
</dbReference>
<dbReference type="InterPro" id="IPR015866">
    <property type="entry name" value="Ser-tRNA-synth_1_N"/>
</dbReference>
<dbReference type="InterPro" id="IPR042103">
    <property type="entry name" value="SerRS_1_N_sf"/>
</dbReference>
<dbReference type="InterPro" id="IPR033729">
    <property type="entry name" value="SerRS_core"/>
</dbReference>
<dbReference type="InterPro" id="IPR010978">
    <property type="entry name" value="tRNA-bd_arm"/>
</dbReference>
<dbReference type="NCBIfam" id="TIGR00414">
    <property type="entry name" value="serS"/>
    <property type="match status" value="1"/>
</dbReference>
<dbReference type="PANTHER" id="PTHR43697:SF1">
    <property type="entry name" value="SERINE--TRNA LIGASE"/>
    <property type="match status" value="1"/>
</dbReference>
<dbReference type="PANTHER" id="PTHR43697">
    <property type="entry name" value="SERYL-TRNA SYNTHETASE"/>
    <property type="match status" value="1"/>
</dbReference>
<dbReference type="Pfam" id="PF02403">
    <property type="entry name" value="Seryl_tRNA_N"/>
    <property type="match status" value="1"/>
</dbReference>
<dbReference type="Pfam" id="PF00587">
    <property type="entry name" value="tRNA-synt_2b"/>
    <property type="match status" value="1"/>
</dbReference>
<dbReference type="PIRSF" id="PIRSF001529">
    <property type="entry name" value="Ser-tRNA-synth_IIa"/>
    <property type="match status" value="1"/>
</dbReference>
<dbReference type="PRINTS" id="PR00981">
    <property type="entry name" value="TRNASYNTHSER"/>
</dbReference>
<dbReference type="SUPFAM" id="SSF55681">
    <property type="entry name" value="Class II aaRS and biotin synthetases"/>
    <property type="match status" value="1"/>
</dbReference>
<dbReference type="SUPFAM" id="SSF46589">
    <property type="entry name" value="tRNA-binding arm"/>
    <property type="match status" value="1"/>
</dbReference>
<dbReference type="PROSITE" id="PS50862">
    <property type="entry name" value="AA_TRNA_LIGASE_II"/>
    <property type="match status" value="1"/>
</dbReference>
<sequence>MLDIKLIREQPDEVKRRLARCGVDGAVVDQVLAFDEQRRRLIYEVETRKAERNTVSKQIGAMKDPAERQAKIDAMRQLGDEIAALDRQLAEVEEQQRAVMLEIRNLPHPDVPDGVDDRDNVVIYQEGEERQLPFPARPHWELGEALGIIDFERGVKLAGSRFYVMRGAGARLQRAVIQWLIDLHLEQGYQEVYTPFVVKESVLWASGQLPKFRDNLYRDEESGLWLVPTAEVPLTSLYADEILDASQLPIYHVAYTPCFRKEQLSAGRDVRGIKRGHQFDKVEMYMFVTPDQSYQALEKLRRDAEECARRLGLPFRTKLLCTGDLGFGSTKTYDIEVWAPGVGEWLEVSSCSNVEAFQARRANLRYRPEPGAKPEFLHTLNGSGLGLPRTIIAIMENYQQEDGSILIPEVLRPYMGGMERIGP</sequence>
<comment type="function">
    <text evidence="1">Catalyzes the attachment of serine to tRNA(Ser). Is also able to aminoacylate tRNA(Sec) with serine, to form the misacylated tRNA L-seryl-tRNA(Sec), which will be further converted into selenocysteinyl-tRNA(Sec).</text>
</comment>
<comment type="catalytic activity">
    <reaction evidence="1">
        <text>tRNA(Ser) + L-serine + ATP = L-seryl-tRNA(Ser) + AMP + diphosphate + H(+)</text>
        <dbReference type="Rhea" id="RHEA:12292"/>
        <dbReference type="Rhea" id="RHEA-COMP:9669"/>
        <dbReference type="Rhea" id="RHEA-COMP:9703"/>
        <dbReference type="ChEBI" id="CHEBI:15378"/>
        <dbReference type="ChEBI" id="CHEBI:30616"/>
        <dbReference type="ChEBI" id="CHEBI:33019"/>
        <dbReference type="ChEBI" id="CHEBI:33384"/>
        <dbReference type="ChEBI" id="CHEBI:78442"/>
        <dbReference type="ChEBI" id="CHEBI:78533"/>
        <dbReference type="ChEBI" id="CHEBI:456215"/>
        <dbReference type="EC" id="6.1.1.11"/>
    </reaction>
</comment>
<comment type="catalytic activity">
    <reaction evidence="1">
        <text>tRNA(Sec) + L-serine + ATP = L-seryl-tRNA(Sec) + AMP + diphosphate + H(+)</text>
        <dbReference type="Rhea" id="RHEA:42580"/>
        <dbReference type="Rhea" id="RHEA-COMP:9742"/>
        <dbReference type="Rhea" id="RHEA-COMP:10128"/>
        <dbReference type="ChEBI" id="CHEBI:15378"/>
        <dbReference type="ChEBI" id="CHEBI:30616"/>
        <dbReference type="ChEBI" id="CHEBI:33019"/>
        <dbReference type="ChEBI" id="CHEBI:33384"/>
        <dbReference type="ChEBI" id="CHEBI:78442"/>
        <dbReference type="ChEBI" id="CHEBI:78533"/>
        <dbReference type="ChEBI" id="CHEBI:456215"/>
        <dbReference type="EC" id="6.1.1.11"/>
    </reaction>
</comment>
<comment type="pathway">
    <text evidence="1">Aminoacyl-tRNA biosynthesis; selenocysteinyl-tRNA(Sec) biosynthesis; L-seryl-tRNA(Sec) from L-serine and tRNA(Sec): step 1/1.</text>
</comment>
<comment type="subunit">
    <text evidence="1">Homodimer. The tRNA molecule binds across the dimer.</text>
</comment>
<comment type="subcellular location">
    <subcellularLocation>
        <location evidence="1">Cytoplasm</location>
    </subcellularLocation>
</comment>
<comment type="domain">
    <text evidence="1">Consists of two distinct domains, a catalytic core and a N-terminal extension that is involved in tRNA binding.</text>
</comment>
<comment type="similarity">
    <text evidence="1">Belongs to the class-II aminoacyl-tRNA synthetase family. Type-1 seryl-tRNA synthetase subfamily.</text>
</comment>
<gene>
    <name evidence="1" type="primary">serS</name>
    <name type="ordered locus">Caur_0444</name>
</gene>
<accession>A9WE34</accession>
<reference key="1">
    <citation type="journal article" date="2011" name="BMC Genomics">
        <title>Complete genome sequence of the filamentous anoxygenic phototrophic bacterium Chloroflexus aurantiacus.</title>
        <authorList>
            <person name="Tang K.H."/>
            <person name="Barry K."/>
            <person name="Chertkov O."/>
            <person name="Dalin E."/>
            <person name="Han C.S."/>
            <person name="Hauser L.J."/>
            <person name="Honchak B.M."/>
            <person name="Karbach L.E."/>
            <person name="Land M.L."/>
            <person name="Lapidus A."/>
            <person name="Larimer F.W."/>
            <person name="Mikhailova N."/>
            <person name="Pitluck S."/>
            <person name="Pierson B.K."/>
            <person name="Blankenship R.E."/>
        </authorList>
    </citation>
    <scope>NUCLEOTIDE SEQUENCE [LARGE SCALE GENOMIC DNA]</scope>
    <source>
        <strain>ATCC 29366 / DSM 635 / J-10-fl</strain>
    </source>
</reference>
<protein>
    <recommendedName>
        <fullName evidence="1">Serine--tRNA ligase</fullName>
        <ecNumber evidence="1">6.1.1.11</ecNumber>
    </recommendedName>
    <alternativeName>
        <fullName evidence="1">Seryl-tRNA synthetase</fullName>
        <shortName evidence="1">SerRS</shortName>
    </alternativeName>
    <alternativeName>
        <fullName evidence="1">Seryl-tRNA(Ser/Sec) synthetase</fullName>
    </alternativeName>
</protein>
<evidence type="ECO:0000255" key="1">
    <source>
        <dbReference type="HAMAP-Rule" id="MF_00176"/>
    </source>
</evidence>
<organism>
    <name type="scientific">Chloroflexus aurantiacus (strain ATCC 29366 / DSM 635 / J-10-fl)</name>
    <dbReference type="NCBI Taxonomy" id="324602"/>
    <lineage>
        <taxon>Bacteria</taxon>
        <taxon>Bacillati</taxon>
        <taxon>Chloroflexota</taxon>
        <taxon>Chloroflexia</taxon>
        <taxon>Chloroflexales</taxon>
        <taxon>Chloroflexineae</taxon>
        <taxon>Chloroflexaceae</taxon>
        <taxon>Chloroflexus</taxon>
    </lineage>
</organism>
<proteinExistence type="inferred from homology"/>
<keyword id="KW-0030">Aminoacyl-tRNA synthetase</keyword>
<keyword id="KW-0067">ATP-binding</keyword>
<keyword id="KW-0963">Cytoplasm</keyword>
<keyword id="KW-0436">Ligase</keyword>
<keyword id="KW-0547">Nucleotide-binding</keyword>
<keyword id="KW-0648">Protein biosynthesis</keyword>
<keyword id="KW-1185">Reference proteome</keyword>
<feature type="chain" id="PRO_1000077190" description="Serine--tRNA ligase">
    <location>
        <begin position="1"/>
        <end position="423"/>
    </location>
</feature>
<feature type="binding site" evidence="1">
    <location>
        <begin position="229"/>
        <end position="231"/>
    </location>
    <ligand>
        <name>L-serine</name>
        <dbReference type="ChEBI" id="CHEBI:33384"/>
    </ligand>
</feature>
<feature type="binding site" evidence="1">
    <location>
        <begin position="260"/>
        <end position="262"/>
    </location>
    <ligand>
        <name>ATP</name>
        <dbReference type="ChEBI" id="CHEBI:30616"/>
    </ligand>
</feature>
<feature type="binding site" evidence="1">
    <location>
        <position position="283"/>
    </location>
    <ligand>
        <name>L-serine</name>
        <dbReference type="ChEBI" id="CHEBI:33384"/>
    </ligand>
</feature>
<feature type="binding site" evidence="1">
    <location>
        <begin position="347"/>
        <end position="350"/>
    </location>
    <ligand>
        <name>ATP</name>
        <dbReference type="ChEBI" id="CHEBI:30616"/>
    </ligand>
</feature>
<feature type="binding site" evidence="1">
    <location>
        <position position="383"/>
    </location>
    <ligand>
        <name>L-serine</name>
        <dbReference type="ChEBI" id="CHEBI:33384"/>
    </ligand>
</feature>